<keyword id="KW-0963">Cytoplasm</keyword>
<keyword id="KW-0238">DNA-binding</keyword>
<keyword id="KW-1185">Reference proteome</keyword>
<comment type="function">
    <text evidence="1">Binds to DNA and alters its conformation. May be involved in regulation of gene expression, nucleoid organization and DNA protection.</text>
</comment>
<comment type="subunit">
    <text evidence="1">Homodimer.</text>
</comment>
<comment type="subcellular location">
    <subcellularLocation>
        <location evidence="1">Cytoplasm</location>
        <location evidence="1">Nucleoid</location>
    </subcellularLocation>
</comment>
<comment type="similarity">
    <text evidence="1">Belongs to the YbaB/EbfC family.</text>
</comment>
<organism>
    <name type="scientific">Staphylococcus aureus (strain NCTC 8325 / PS 47)</name>
    <dbReference type="NCBI Taxonomy" id="93061"/>
    <lineage>
        <taxon>Bacteria</taxon>
        <taxon>Bacillati</taxon>
        <taxon>Bacillota</taxon>
        <taxon>Bacilli</taxon>
        <taxon>Bacillales</taxon>
        <taxon>Staphylococcaceae</taxon>
        <taxon>Staphylococcus</taxon>
    </lineage>
</organism>
<reference key="1">
    <citation type="book" date="2006" name="Gram positive pathogens, 2nd edition">
        <title>The Staphylococcus aureus NCTC 8325 genome.</title>
        <editorList>
            <person name="Fischetti V."/>
            <person name="Novick R."/>
            <person name="Ferretti J."/>
            <person name="Portnoy D."/>
            <person name="Rood J."/>
        </editorList>
        <authorList>
            <person name="Gillaspy A.F."/>
            <person name="Worrell V."/>
            <person name="Orvis J."/>
            <person name="Roe B.A."/>
            <person name="Dyer D.W."/>
            <person name="Iandolo J.J."/>
        </authorList>
    </citation>
    <scope>NUCLEOTIDE SEQUENCE [LARGE SCALE GENOMIC DNA]</scope>
    <source>
        <strain>NCTC 8325 / PS 47</strain>
    </source>
</reference>
<gene>
    <name type="ordered locus">SAOUHSC_00444</name>
</gene>
<feature type="chain" id="PRO_1000003832" description="Nucleoid-associated protein SAOUHSC_00444">
    <location>
        <begin position="1"/>
        <end position="105"/>
    </location>
</feature>
<feature type="region of interest" description="Disordered" evidence="2">
    <location>
        <begin position="1"/>
        <end position="33"/>
    </location>
</feature>
<feature type="compositionally biased region" description="Low complexity" evidence="2">
    <location>
        <begin position="7"/>
        <end position="16"/>
    </location>
</feature>
<feature type="compositionally biased region" description="Basic and acidic residues" evidence="2">
    <location>
        <begin position="21"/>
        <end position="33"/>
    </location>
</feature>
<sequence>MRGGGNMQQMMKQMQKMQKKMAQEQEKLKEERIVGTAGGGMVAVTVTGHKEVVDVEIKEEAVDPDDIEMLQDLVLAATNEAMNKADELTQERLGKHTQGLNIPGM</sequence>
<accession>Q2G0T4</accession>
<dbReference type="EMBL" id="CP000253">
    <property type="protein sequence ID" value="ABD29602.1"/>
    <property type="molecule type" value="Genomic_DNA"/>
</dbReference>
<dbReference type="RefSeq" id="WP_001213992.1">
    <property type="nucleotide sequence ID" value="NZ_LS483365.1"/>
</dbReference>
<dbReference type="RefSeq" id="YP_499026.1">
    <property type="nucleotide sequence ID" value="NC_007795.1"/>
</dbReference>
<dbReference type="SMR" id="Q2G0T4"/>
<dbReference type="STRING" id="93061.SAOUHSC_00444"/>
<dbReference type="PaxDb" id="1280-SAXN108_0529"/>
<dbReference type="GeneID" id="3919115"/>
<dbReference type="KEGG" id="sao:SAOUHSC_00444"/>
<dbReference type="PATRIC" id="fig|93061.5.peg.405"/>
<dbReference type="eggNOG" id="COG0718">
    <property type="taxonomic scope" value="Bacteria"/>
</dbReference>
<dbReference type="HOGENOM" id="CLU_140930_1_0_9"/>
<dbReference type="OrthoDB" id="9795263at2"/>
<dbReference type="PRO" id="PR:Q2G0T4"/>
<dbReference type="Proteomes" id="UP000008816">
    <property type="component" value="Chromosome"/>
</dbReference>
<dbReference type="GO" id="GO:0043590">
    <property type="term" value="C:bacterial nucleoid"/>
    <property type="evidence" value="ECO:0007669"/>
    <property type="project" value="UniProtKB-UniRule"/>
</dbReference>
<dbReference type="GO" id="GO:0005829">
    <property type="term" value="C:cytosol"/>
    <property type="evidence" value="ECO:0000318"/>
    <property type="project" value="GO_Central"/>
</dbReference>
<dbReference type="GO" id="GO:0003677">
    <property type="term" value="F:DNA binding"/>
    <property type="evidence" value="ECO:0000318"/>
    <property type="project" value="GO_Central"/>
</dbReference>
<dbReference type="FunFam" id="3.30.1310.10:FF:000002">
    <property type="entry name" value="Nucleoid-associated protein IKC_06587"/>
    <property type="match status" value="1"/>
</dbReference>
<dbReference type="Gene3D" id="3.30.1310.10">
    <property type="entry name" value="Nucleoid-associated protein YbaB-like domain"/>
    <property type="match status" value="1"/>
</dbReference>
<dbReference type="HAMAP" id="MF_00274">
    <property type="entry name" value="DNA_YbaB_EbfC"/>
    <property type="match status" value="1"/>
</dbReference>
<dbReference type="InterPro" id="IPR036894">
    <property type="entry name" value="YbaB-like_sf"/>
</dbReference>
<dbReference type="InterPro" id="IPR004401">
    <property type="entry name" value="YbaB/EbfC"/>
</dbReference>
<dbReference type="NCBIfam" id="TIGR00103">
    <property type="entry name" value="DNA_YbaB_EbfC"/>
    <property type="match status" value="1"/>
</dbReference>
<dbReference type="PANTHER" id="PTHR33449">
    <property type="entry name" value="NUCLEOID-ASSOCIATED PROTEIN YBAB"/>
    <property type="match status" value="1"/>
</dbReference>
<dbReference type="PANTHER" id="PTHR33449:SF1">
    <property type="entry name" value="NUCLEOID-ASSOCIATED PROTEIN YBAB"/>
    <property type="match status" value="1"/>
</dbReference>
<dbReference type="Pfam" id="PF02575">
    <property type="entry name" value="YbaB_DNA_bd"/>
    <property type="match status" value="1"/>
</dbReference>
<dbReference type="PIRSF" id="PIRSF004555">
    <property type="entry name" value="UCP004555"/>
    <property type="match status" value="1"/>
</dbReference>
<dbReference type="SUPFAM" id="SSF82607">
    <property type="entry name" value="YbaB-like"/>
    <property type="match status" value="1"/>
</dbReference>
<name>Y444_STAA8</name>
<protein>
    <recommendedName>
        <fullName evidence="1">Nucleoid-associated protein SAOUHSC_00444</fullName>
    </recommendedName>
</protein>
<evidence type="ECO:0000255" key="1">
    <source>
        <dbReference type="HAMAP-Rule" id="MF_00274"/>
    </source>
</evidence>
<evidence type="ECO:0000256" key="2">
    <source>
        <dbReference type="SAM" id="MobiDB-lite"/>
    </source>
</evidence>
<proteinExistence type="inferred from homology"/>